<organism>
    <name type="scientific">Neurospora crassa (strain ATCC 24698 / 74-OR23-1A / CBS 708.71 / DSM 1257 / FGSC 987)</name>
    <dbReference type="NCBI Taxonomy" id="367110"/>
    <lineage>
        <taxon>Eukaryota</taxon>
        <taxon>Fungi</taxon>
        <taxon>Dikarya</taxon>
        <taxon>Ascomycota</taxon>
        <taxon>Pezizomycotina</taxon>
        <taxon>Sordariomycetes</taxon>
        <taxon>Sordariomycetidae</taxon>
        <taxon>Sordariales</taxon>
        <taxon>Sordariaceae</taxon>
        <taxon>Neurospora</taxon>
    </lineage>
</organism>
<accession>Q9C2N1</accession>
<accession>Q1K7Y1</accession>
<accession>V5ILE2</accession>
<gene>
    <name type="primary">vib-1</name>
    <name type="ORF">17E5.170</name>
    <name type="ORF">NCU03725</name>
</gene>
<proteinExistence type="predicted"/>
<keyword id="KW-0963">Cytoplasm</keyword>
<keyword id="KW-0238">DNA-binding</keyword>
<keyword id="KW-0539">Nucleus</keyword>
<keyword id="KW-1185">Reference proteome</keyword>
<keyword id="KW-0804">Transcription</keyword>
<keyword id="KW-0805">Transcription regulation</keyword>
<sequence length="670" mass="72972">MAELRAETQHGGIWPNYGNPVQMNTGRYNTQESSVPVGSAASSHLVRPRSRQHTMDYHNAPYHHGRPAQEDGDGYERYPHPSLMNIPSITTGMKRSYSQVDQTPYTEMVQDLRDDYKPAMNHDQKLLSFKKVGDKHTIVDHKGRIHEIEIEAQLHGMFFLSEFPSPGDGNVLNAELTCYRRNLFQISGNICFPQIPLSVMLETGETSQIKNMEVTISAIESVDGHPVRLIVIPWKTPPPNSPEVNQAPDQEPPSLPLIPWSEEEEDNGGDHYAIYPIGWRRLQFRIATANNGRRKELQQHFVLHLKLHGTLANGTKLVLSELTTAPIVVRGRSPRNFQARKEIPLLGSSAGSRGQTLVETGHSIVAQAVALNKPPYDSRPRVSSMDLPRTAFTFTSAKQMPQSPMQMRSNSYPTSWNPSSQVSMPHNPGSTSYPTTSMAGPEPYPKMPLSGAPSYTAEPQEMPIQQTSMPSMQLSMVAQDQQPSAPIRTQYATYASAPPPHLSLPSTADSSLNVPRYVDSNPRPSKSPRHGSHGSLTNETASGEYRYGPPSYLGNSSSDISPQSQHHPPTSGAGAGGASSGAYGTPSQEGGASAPASAPTSAAPPRDYFPPSQSWTSTAGEGQTSSYTNGGDRSYSFPTGVKTEPHSQPSHSGAPVPGVYGNNHYAWNAT</sequence>
<evidence type="ECO:0000255" key="1">
    <source>
        <dbReference type="PROSITE-ProRule" id="PRU00850"/>
    </source>
</evidence>
<evidence type="ECO:0000256" key="2">
    <source>
        <dbReference type="SAM" id="MobiDB-lite"/>
    </source>
</evidence>
<evidence type="ECO:0000269" key="3">
    <source>
    </source>
</evidence>
<evidence type="ECO:0000269" key="4">
    <source>
    </source>
</evidence>
<evidence type="ECO:0000269" key="5">
    <source>
    </source>
</evidence>
<evidence type="ECO:0000305" key="6"/>
<comment type="function">
    <text evidence="3 4 5">Transcription factor that acts as a positive regulator of nonrepressible acid phosphatase activity. Is a major regulator of responses to nitrogen and carbon starvation and is essential for the expression of genes involved in vegetative incompatibility (like pin-c, het-6, and tol). Vegetative incompatibility is a non-self-recognition system ubiquitous in filamentous fungi which results in programmed cell death.</text>
</comment>
<comment type="subcellular location">
    <subcellularLocation>
        <location evidence="5">Nucleus</location>
    </subcellularLocation>
    <subcellularLocation>
        <location evidence="5">Cytoplasm</location>
    </subcellularLocation>
    <text>Localized in nuclei of all vegetative hyphae and cytoplasmically localized in conidiophores and immature conidia.</text>
</comment>
<comment type="sequence caution" evidence="6">
    <conflict type="erroneous initiation">
        <sequence resource="EMBL-CDS" id="ESA42442"/>
    </conflict>
    <text>Extended N-terminus.</text>
</comment>
<dbReference type="EMBL" id="AL513467">
    <property type="protein sequence ID" value="CAC28843.1"/>
    <property type="molecule type" value="Genomic_DNA"/>
</dbReference>
<dbReference type="EMBL" id="BK000540">
    <property type="protein sequence ID" value="DAA00072.1"/>
    <property type="molecule type" value="Genomic_DNA"/>
</dbReference>
<dbReference type="EMBL" id="CM002240">
    <property type="protein sequence ID" value="ESA42442.1"/>
    <property type="status" value="ALT_INIT"/>
    <property type="molecule type" value="Genomic_DNA"/>
</dbReference>
<dbReference type="RefSeq" id="XP_011394570.1">
    <property type="nucleotide sequence ID" value="XM_011396268.1"/>
</dbReference>
<dbReference type="STRING" id="367110.Q9C2N1"/>
<dbReference type="PaxDb" id="5141-EFNCRP00000003366"/>
<dbReference type="EnsemblFungi" id="ESA42442">
    <property type="protein sequence ID" value="ESA42442"/>
    <property type="gene ID" value="NCU03725"/>
</dbReference>
<dbReference type="GeneID" id="3877601"/>
<dbReference type="KEGG" id="ncr:NCU03725"/>
<dbReference type="HOGENOM" id="CLU_019835_1_0_1"/>
<dbReference type="InParanoid" id="Q9C2N1"/>
<dbReference type="OrthoDB" id="4117572at2759"/>
<dbReference type="Proteomes" id="UP000001805">
    <property type="component" value="Chromosome 2, Linkage Group V"/>
</dbReference>
<dbReference type="GO" id="GO:0005737">
    <property type="term" value="C:cytoplasm"/>
    <property type="evidence" value="ECO:0007669"/>
    <property type="project" value="UniProtKB-SubCell"/>
</dbReference>
<dbReference type="GO" id="GO:0000228">
    <property type="term" value="C:nuclear chromosome"/>
    <property type="evidence" value="ECO:0000318"/>
    <property type="project" value="GO_Central"/>
</dbReference>
<dbReference type="GO" id="GO:0003677">
    <property type="term" value="F:DNA binding"/>
    <property type="evidence" value="ECO:0007669"/>
    <property type="project" value="UniProtKB-KW"/>
</dbReference>
<dbReference type="GO" id="GO:0003700">
    <property type="term" value="F:DNA-binding transcription factor activity"/>
    <property type="evidence" value="ECO:0000318"/>
    <property type="project" value="GO_Central"/>
</dbReference>
<dbReference type="GO" id="GO:0051321">
    <property type="term" value="P:meiotic cell cycle"/>
    <property type="evidence" value="ECO:0000318"/>
    <property type="project" value="GO_Central"/>
</dbReference>
<dbReference type="GO" id="GO:0045944">
    <property type="term" value="P:positive regulation of transcription by RNA polymerase II"/>
    <property type="evidence" value="ECO:0000318"/>
    <property type="project" value="GO_Central"/>
</dbReference>
<dbReference type="FunFam" id="2.60.40.1390:FF:000002">
    <property type="entry name" value="PhoG like DNA-binding family protein"/>
    <property type="match status" value="1"/>
</dbReference>
<dbReference type="Gene3D" id="2.60.40.1390">
    <property type="entry name" value="NDT80 DNA-binding domain"/>
    <property type="match status" value="1"/>
</dbReference>
<dbReference type="InterPro" id="IPR052605">
    <property type="entry name" value="Fungal_trans_regulator"/>
</dbReference>
<dbReference type="InterPro" id="IPR024061">
    <property type="entry name" value="NDT80_DNA-bd_dom"/>
</dbReference>
<dbReference type="InterPro" id="IPR037141">
    <property type="entry name" value="NDT80_DNA-bd_dom_sf"/>
</dbReference>
<dbReference type="InterPro" id="IPR008967">
    <property type="entry name" value="p53-like_TF_DNA-bd_sf"/>
</dbReference>
<dbReference type="PANTHER" id="PTHR35144">
    <property type="entry name" value="MEIOSIS-SPECIFIC TRANSCRIPTION FACTOR NDT80"/>
    <property type="match status" value="1"/>
</dbReference>
<dbReference type="PANTHER" id="PTHR35144:SF4">
    <property type="entry name" value="TRANSCRIPTION FACTOR VIB-1"/>
    <property type="match status" value="1"/>
</dbReference>
<dbReference type="Pfam" id="PF05224">
    <property type="entry name" value="NDT80_PhoG"/>
    <property type="match status" value="1"/>
</dbReference>
<dbReference type="SUPFAM" id="SSF49417">
    <property type="entry name" value="p53-like transcription factors"/>
    <property type="match status" value="1"/>
</dbReference>
<dbReference type="PROSITE" id="PS51517">
    <property type="entry name" value="NDT80"/>
    <property type="match status" value="1"/>
</dbReference>
<protein>
    <recommendedName>
        <fullName>Transcription factor vib-1</fullName>
    </recommendedName>
    <alternativeName>
        <fullName>Vegetative incompatibility blocked protein 1</fullName>
    </alternativeName>
</protein>
<reference key="1">
    <citation type="journal article" date="2002" name="Genetics">
        <title>Identification of vib-1, a locus involved in vegetative incompatibility mediated by het-c in Neurospora crassa.</title>
        <authorList>
            <person name="Xiang Q."/>
            <person name="Glass N.L."/>
        </authorList>
    </citation>
    <scope>NUCLEOTIDE SEQUENCE [GENOMIC DNA]</scope>
    <scope>FUNCTION</scope>
</reference>
<reference key="2">
    <citation type="journal article" date="2003" name="Nucleic Acids Res.">
        <title>What's in the genome of a filamentous fungus? Analysis of the Neurospora genome sequence.</title>
        <authorList>
            <person name="Mannhaupt G."/>
            <person name="Montrone C."/>
            <person name="Haase D."/>
            <person name="Mewes H.-W."/>
            <person name="Aign V."/>
            <person name="Hoheisel J.D."/>
            <person name="Fartmann B."/>
            <person name="Nyakatura G."/>
            <person name="Kempken F."/>
            <person name="Maier J."/>
            <person name="Schulte U."/>
        </authorList>
    </citation>
    <scope>NUCLEOTIDE SEQUENCE [LARGE SCALE GENOMIC DNA]</scope>
    <source>
        <strain>ATCC 24698 / 74-OR23-1A / CBS 708.71 / DSM 1257 / FGSC 987</strain>
    </source>
</reference>
<reference key="3">
    <citation type="journal article" date="2003" name="Nature">
        <title>The genome sequence of the filamentous fungus Neurospora crassa.</title>
        <authorList>
            <person name="Galagan J.E."/>
            <person name="Calvo S.E."/>
            <person name="Borkovich K.A."/>
            <person name="Selker E.U."/>
            <person name="Read N.D."/>
            <person name="Jaffe D.B."/>
            <person name="FitzHugh W."/>
            <person name="Ma L.-J."/>
            <person name="Smirnov S."/>
            <person name="Purcell S."/>
            <person name="Rehman B."/>
            <person name="Elkins T."/>
            <person name="Engels R."/>
            <person name="Wang S."/>
            <person name="Nielsen C.B."/>
            <person name="Butler J."/>
            <person name="Endrizzi M."/>
            <person name="Qui D."/>
            <person name="Ianakiev P."/>
            <person name="Bell-Pedersen D."/>
            <person name="Nelson M.A."/>
            <person name="Werner-Washburne M."/>
            <person name="Selitrennikoff C.P."/>
            <person name="Kinsey J.A."/>
            <person name="Braun E.L."/>
            <person name="Zelter A."/>
            <person name="Schulte U."/>
            <person name="Kothe G.O."/>
            <person name="Jedd G."/>
            <person name="Mewes H.-W."/>
            <person name="Staben C."/>
            <person name="Marcotte E."/>
            <person name="Greenberg D."/>
            <person name="Roy A."/>
            <person name="Foley K."/>
            <person name="Naylor J."/>
            <person name="Stange-Thomann N."/>
            <person name="Barrett R."/>
            <person name="Gnerre S."/>
            <person name="Kamal M."/>
            <person name="Kamvysselis M."/>
            <person name="Mauceli E.W."/>
            <person name="Bielke C."/>
            <person name="Rudd S."/>
            <person name="Frishman D."/>
            <person name="Krystofova S."/>
            <person name="Rasmussen C."/>
            <person name="Metzenberg R.L."/>
            <person name="Perkins D.D."/>
            <person name="Kroken S."/>
            <person name="Cogoni C."/>
            <person name="Macino G."/>
            <person name="Catcheside D.E.A."/>
            <person name="Li W."/>
            <person name="Pratt R.J."/>
            <person name="Osmani S.A."/>
            <person name="DeSouza C.P.C."/>
            <person name="Glass N.L."/>
            <person name="Orbach M.J."/>
            <person name="Berglund J.A."/>
            <person name="Voelker R."/>
            <person name="Yarden O."/>
            <person name="Plamann M."/>
            <person name="Seiler S."/>
            <person name="Dunlap J.C."/>
            <person name="Radford A."/>
            <person name="Aramayo R."/>
            <person name="Natvig D.O."/>
            <person name="Alex L.A."/>
            <person name="Mannhaupt G."/>
            <person name="Ebbole D.J."/>
            <person name="Freitag M."/>
            <person name="Paulsen I."/>
            <person name="Sachs M.S."/>
            <person name="Lander E.S."/>
            <person name="Nusbaum C."/>
            <person name="Birren B.W."/>
        </authorList>
    </citation>
    <scope>NUCLEOTIDE SEQUENCE [LARGE SCALE GENOMIC DNA]</scope>
    <source>
        <strain>ATCC 24698 / 74-OR23-1A / CBS 708.71 / DSM 1257 / FGSC 987</strain>
    </source>
</reference>
<reference key="4">
    <citation type="journal article" date="2004" name="Fungal Genet. Biol.">
        <title>The control of mating type heterokaryon incompatibility by vib-1, a locus involved in het-c heterokaryon incompatibility in Neurospora crassa.</title>
        <authorList>
            <person name="Xiang Q."/>
            <person name="Glass N.L."/>
        </authorList>
    </citation>
    <scope>FUNCTION</scope>
</reference>
<reference key="5">
    <citation type="journal article" date="2006" name="Eukaryot. Cell">
        <title>VIB-1 is required for expression of genes necessary for programmed cell death in Neurospora crassa.</title>
        <authorList>
            <person name="Dementhon K."/>
            <person name="Iyer G."/>
            <person name="Glass N.L."/>
        </authorList>
    </citation>
    <scope>SUBCELLULAR LOCATION</scope>
    <scope>FUNCTION</scope>
</reference>
<name>VIB1_NEUCR</name>
<feature type="chain" id="PRO_0000371412" description="Transcription factor vib-1">
    <location>
        <begin position="1"/>
        <end position="670"/>
    </location>
</feature>
<feature type="DNA-binding region" description="NDT80" evidence="1">
    <location>
        <begin position="106"/>
        <end position="341"/>
    </location>
</feature>
<feature type="region of interest" description="Disordered" evidence="2">
    <location>
        <begin position="394"/>
        <end position="457"/>
    </location>
</feature>
<feature type="region of interest" description="Disordered" evidence="2">
    <location>
        <begin position="496"/>
        <end position="670"/>
    </location>
</feature>
<feature type="compositionally biased region" description="Polar residues" evidence="2">
    <location>
        <begin position="394"/>
        <end position="438"/>
    </location>
</feature>
<feature type="compositionally biased region" description="Polar residues" evidence="2">
    <location>
        <begin position="553"/>
        <end position="568"/>
    </location>
</feature>
<feature type="compositionally biased region" description="Low complexity" evidence="2">
    <location>
        <begin position="592"/>
        <end position="605"/>
    </location>
</feature>
<feature type="compositionally biased region" description="Polar residues" evidence="2">
    <location>
        <begin position="611"/>
        <end position="631"/>
    </location>
</feature>